<proteinExistence type="evidence at protein level"/>
<accession>Q9ZI33</accession>
<dbReference type="EMBL" id="AF041820">
    <property type="protein sequence ID" value="AAD05387.1"/>
    <property type="molecule type" value="Genomic_DNA"/>
</dbReference>
<dbReference type="EMBL" id="BA000040">
    <property type="protein sequence ID" value="BAC47851.1"/>
    <property type="molecule type" value="Genomic_DNA"/>
</dbReference>
<dbReference type="RefSeq" id="NP_769226.1">
    <property type="nucleotide sequence ID" value="NC_004463.1"/>
</dbReference>
<dbReference type="RefSeq" id="WP_011085372.1">
    <property type="nucleotide sequence ID" value="NC_004463.1"/>
</dbReference>
<dbReference type="SMR" id="Q9ZI33"/>
<dbReference type="STRING" id="224911.AAV28_09890"/>
<dbReference type="EnsemblBacteria" id="BAC47851">
    <property type="protein sequence ID" value="BAC47851"/>
    <property type="gene ID" value="BAC47851"/>
</dbReference>
<dbReference type="GeneID" id="46489632"/>
<dbReference type="KEGG" id="bja:blr2586"/>
<dbReference type="PATRIC" id="fig|224911.44.peg.2175"/>
<dbReference type="eggNOG" id="COG4451">
    <property type="taxonomic scope" value="Bacteria"/>
</dbReference>
<dbReference type="HOGENOM" id="CLU_098114_2_0_5"/>
<dbReference type="InParanoid" id="Q9ZI33"/>
<dbReference type="OrthoDB" id="9788955at2"/>
<dbReference type="PhylomeDB" id="Q9ZI33"/>
<dbReference type="SABIO-RK" id="Q9ZI33"/>
<dbReference type="Proteomes" id="UP000002526">
    <property type="component" value="Chromosome"/>
</dbReference>
<dbReference type="GO" id="GO:0016984">
    <property type="term" value="F:ribulose-bisphosphate carboxylase activity"/>
    <property type="evidence" value="ECO:0007669"/>
    <property type="project" value="UniProtKB-UniRule"/>
</dbReference>
<dbReference type="GO" id="GO:0019253">
    <property type="term" value="P:reductive pentose-phosphate cycle"/>
    <property type="evidence" value="ECO:0007669"/>
    <property type="project" value="UniProtKB-UniRule"/>
</dbReference>
<dbReference type="CDD" id="cd03527">
    <property type="entry name" value="RuBisCO_small"/>
    <property type="match status" value="1"/>
</dbReference>
<dbReference type="Gene3D" id="3.30.190.10">
    <property type="entry name" value="Ribulose bisphosphate carboxylase, small subunit"/>
    <property type="match status" value="1"/>
</dbReference>
<dbReference type="HAMAP" id="MF_00859">
    <property type="entry name" value="RuBisCO_S_bact"/>
    <property type="match status" value="1"/>
</dbReference>
<dbReference type="InterPro" id="IPR024681">
    <property type="entry name" value="RuBisCO_ssu"/>
</dbReference>
<dbReference type="InterPro" id="IPR000894">
    <property type="entry name" value="RuBisCO_ssu_dom"/>
</dbReference>
<dbReference type="InterPro" id="IPR036385">
    <property type="entry name" value="RuBisCO_ssu_sf"/>
</dbReference>
<dbReference type="PANTHER" id="PTHR31262">
    <property type="entry name" value="RIBULOSE BISPHOSPHATE CARBOXYLASE SMALL CHAIN 1, CHLOROPLASTIC"/>
    <property type="match status" value="1"/>
</dbReference>
<dbReference type="PANTHER" id="PTHR31262:SF23">
    <property type="entry name" value="RIBULOSE BISPHOSPHATE CARBOXYLASE SMALL SUBUNIT"/>
    <property type="match status" value="1"/>
</dbReference>
<dbReference type="Pfam" id="PF00101">
    <property type="entry name" value="RuBisCO_small"/>
    <property type="match status" value="1"/>
</dbReference>
<dbReference type="SMART" id="SM00961">
    <property type="entry name" value="RuBisCO_small"/>
    <property type="match status" value="1"/>
</dbReference>
<dbReference type="SUPFAM" id="SSF55239">
    <property type="entry name" value="RuBisCO, small subunit"/>
    <property type="match status" value="1"/>
</dbReference>
<name>RBS_BRADU</name>
<protein>
    <recommendedName>
        <fullName evidence="1">Ribulose bisphosphate carboxylase small subunit</fullName>
        <shortName evidence="1">RuBisCO small subunit</shortName>
    </recommendedName>
</protein>
<sequence>MKLTQGCFSFLPDLTDDQIYKQVQYCLAKGWAVNIEFTDDPHPRNTYWEMWGLPMFDLQDAAGVMMELAECRRVYGDRYIRISGFDSSPGWESVRISFLVNRPPQEAEFELVRQEVGGRAIRYTTVRKAPAHVS</sequence>
<feature type="chain" id="PRO_0000198611" description="Ribulose bisphosphate carboxylase small subunit">
    <location>
        <begin position="1"/>
        <end position="134"/>
    </location>
</feature>
<evidence type="ECO:0000255" key="1">
    <source>
        <dbReference type="HAMAP-Rule" id="MF_00859"/>
    </source>
</evidence>
<evidence type="ECO:0000269" key="2">
    <source>
    </source>
</evidence>
<evidence type="ECO:0000305" key="3">
    <source>
    </source>
</evidence>
<organism>
    <name type="scientific">Bradyrhizobium diazoefficiens (strain JCM 10833 / BCRC 13528 / IAM 13628 / NBRC 14792 / USDA 110)</name>
    <dbReference type="NCBI Taxonomy" id="224911"/>
    <lineage>
        <taxon>Bacteria</taxon>
        <taxon>Pseudomonadati</taxon>
        <taxon>Pseudomonadota</taxon>
        <taxon>Alphaproteobacteria</taxon>
        <taxon>Hyphomicrobiales</taxon>
        <taxon>Nitrobacteraceae</taxon>
        <taxon>Bradyrhizobium</taxon>
    </lineage>
</organism>
<keyword id="KW-0113">Calvin cycle</keyword>
<keyword id="KW-0120">Carbon dioxide fixation</keyword>
<keyword id="KW-1185">Reference proteome</keyword>
<comment type="function">
    <text evidence="1 2">RuBisCO catalyzes two reactions: the carboxylation of D-ribulose 1,5-bisphosphate, the primary event in carbon dioxide fixation, as well as the oxidative fragmentation of the pentose substrate. Both reactions occur simultaneously and in competition at the same active site. Although the small subunit is not catalytic it is essential for maximal activity.</text>
</comment>
<comment type="biophysicochemical properties">
    <kinetics>
        <KM evidence="2">55 uM for ribulose 1,5-bisphosphate</KM>
        <KM evidence="2">66 uM for CO(2)</KM>
        <Vmax evidence="2">2.8 umol/min/mg enzyme with CO(2) as substrate</Vmax>
        <text>The CO(2)/O(2) specificity factor (tau) is 75.</text>
    </kinetics>
</comment>
<comment type="subunit">
    <text evidence="1 3">Heterohexadecamer of 8 large and 8 small subunits.</text>
</comment>
<comment type="miscellaneous">
    <text evidence="1">The basic functional RuBisCO is composed of a large chain homodimer in a 'head-to-tail' conformation. In form I RuBisCO this homodimer is arranged in a barrel-like tetramer with the small subunits forming a tetrameric 'cap' on each end of the 'barrel'.</text>
</comment>
<comment type="similarity">
    <text evidence="1">Belongs to the RuBisCO small chain family.</text>
</comment>
<reference key="1">
    <citation type="journal article" date="1999" name="Arch. Biochem. Biophys.">
        <title>Closely related form I ribulose bisphosphate carboxylase/oxygenase molecules that possess different CO2/O2 substrate specificities.</title>
        <authorList>
            <person name="Horken K.M."/>
            <person name="Tabita F.R."/>
        </authorList>
    </citation>
    <scope>NUCLEOTIDE SEQUENCE [GENOMIC DNA]</scope>
    <scope>FUNCTION</scope>
    <scope>CATALYTIC ACTIVITY</scope>
    <scope>BIOPHYSICOCHEMICAL PROPERTIES</scope>
    <source>
        <strain>BJ110</strain>
    </source>
</reference>
<reference key="2">
    <citation type="journal article" date="2002" name="DNA Res.">
        <title>Complete genomic sequence of nitrogen-fixing symbiotic bacterium Bradyrhizobium japonicum USDA110.</title>
        <authorList>
            <person name="Kaneko T."/>
            <person name="Nakamura Y."/>
            <person name="Sato S."/>
            <person name="Minamisawa K."/>
            <person name="Uchiumi T."/>
            <person name="Sasamoto S."/>
            <person name="Watanabe A."/>
            <person name="Idesawa K."/>
            <person name="Iriguchi M."/>
            <person name="Kawashima K."/>
            <person name="Kohara M."/>
            <person name="Matsumoto M."/>
            <person name="Shimpo S."/>
            <person name="Tsuruoka H."/>
            <person name="Wada T."/>
            <person name="Yamada M."/>
            <person name="Tabata S."/>
        </authorList>
    </citation>
    <scope>NUCLEOTIDE SEQUENCE [LARGE SCALE GENOMIC DNA]</scope>
    <source>
        <strain>JCM 10833 / BCRC 13528 / IAM 13628 / NBRC 14792 / USDA 110</strain>
    </source>
</reference>
<gene>
    <name evidence="1" type="primary">cbbS</name>
    <name type="ordered locus">blr2586</name>
</gene>